<accession>Q8LDB8</accession>
<accession>Q93Z65</accession>
<accession>Q9CAM6</accession>
<evidence type="ECO:0000250" key="1"/>
<evidence type="ECO:0000255" key="2"/>
<evidence type="ECO:0000255" key="3">
    <source>
        <dbReference type="PROSITE-ProRule" id="PRU00175"/>
    </source>
</evidence>
<evidence type="ECO:0000256" key="4">
    <source>
        <dbReference type="SAM" id="MobiDB-lite"/>
    </source>
</evidence>
<evidence type="ECO:0000305" key="5"/>
<gene>
    <name type="ordered locus">At1g63170</name>
    <name type="ORF">F16M19.7</name>
</gene>
<reference key="1">
    <citation type="journal article" date="2000" name="Nature">
        <title>Sequence and analysis of chromosome 1 of the plant Arabidopsis thaliana.</title>
        <authorList>
            <person name="Theologis A."/>
            <person name="Ecker J.R."/>
            <person name="Palm C.J."/>
            <person name="Federspiel N.A."/>
            <person name="Kaul S."/>
            <person name="White O."/>
            <person name="Alonso J."/>
            <person name="Altafi H."/>
            <person name="Araujo R."/>
            <person name="Bowman C.L."/>
            <person name="Brooks S.Y."/>
            <person name="Buehler E."/>
            <person name="Chan A."/>
            <person name="Chao Q."/>
            <person name="Chen H."/>
            <person name="Cheuk R.F."/>
            <person name="Chin C.W."/>
            <person name="Chung M.K."/>
            <person name="Conn L."/>
            <person name="Conway A.B."/>
            <person name="Conway A.R."/>
            <person name="Creasy T.H."/>
            <person name="Dewar K."/>
            <person name="Dunn P."/>
            <person name="Etgu P."/>
            <person name="Feldblyum T.V."/>
            <person name="Feng J.-D."/>
            <person name="Fong B."/>
            <person name="Fujii C.Y."/>
            <person name="Gill J.E."/>
            <person name="Goldsmith A.D."/>
            <person name="Haas B."/>
            <person name="Hansen N.F."/>
            <person name="Hughes B."/>
            <person name="Huizar L."/>
            <person name="Hunter J.L."/>
            <person name="Jenkins J."/>
            <person name="Johnson-Hopson C."/>
            <person name="Khan S."/>
            <person name="Khaykin E."/>
            <person name="Kim C.J."/>
            <person name="Koo H.L."/>
            <person name="Kremenetskaia I."/>
            <person name="Kurtz D.B."/>
            <person name="Kwan A."/>
            <person name="Lam B."/>
            <person name="Langin-Hooper S."/>
            <person name="Lee A."/>
            <person name="Lee J.M."/>
            <person name="Lenz C.A."/>
            <person name="Li J.H."/>
            <person name="Li Y.-P."/>
            <person name="Lin X."/>
            <person name="Liu S.X."/>
            <person name="Liu Z.A."/>
            <person name="Luros J.S."/>
            <person name="Maiti R."/>
            <person name="Marziali A."/>
            <person name="Militscher J."/>
            <person name="Miranda M."/>
            <person name="Nguyen M."/>
            <person name="Nierman W.C."/>
            <person name="Osborne B.I."/>
            <person name="Pai G."/>
            <person name="Peterson J."/>
            <person name="Pham P.K."/>
            <person name="Rizzo M."/>
            <person name="Rooney T."/>
            <person name="Rowley D."/>
            <person name="Sakano H."/>
            <person name="Salzberg S.L."/>
            <person name="Schwartz J.R."/>
            <person name="Shinn P."/>
            <person name="Southwick A.M."/>
            <person name="Sun H."/>
            <person name="Tallon L.J."/>
            <person name="Tambunga G."/>
            <person name="Toriumi M.J."/>
            <person name="Town C.D."/>
            <person name="Utterback T."/>
            <person name="Van Aken S."/>
            <person name="Vaysberg M."/>
            <person name="Vysotskaia V.S."/>
            <person name="Walker M."/>
            <person name="Wu D."/>
            <person name="Yu G."/>
            <person name="Fraser C.M."/>
            <person name="Venter J.C."/>
            <person name="Davis R.W."/>
        </authorList>
    </citation>
    <scope>NUCLEOTIDE SEQUENCE [LARGE SCALE GENOMIC DNA]</scope>
    <source>
        <strain>cv. Columbia</strain>
    </source>
</reference>
<reference key="2">
    <citation type="journal article" date="2017" name="Plant J.">
        <title>Araport11: a complete reannotation of the Arabidopsis thaliana reference genome.</title>
        <authorList>
            <person name="Cheng C.Y."/>
            <person name="Krishnakumar V."/>
            <person name="Chan A.P."/>
            <person name="Thibaud-Nissen F."/>
            <person name="Schobel S."/>
            <person name="Town C.D."/>
        </authorList>
    </citation>
    <scope>GENOME REANNOTATION</scope>
    <source>
        <strain>cv. Columbia</strain>
    </source>
</reference>
<reference key="3">
    <citation type="journal article" date="2003" name="Science">
        <title>Empirical analysis of transcriptional activity in the Arabidopsis genome.</title>
        <authorList>
            <person name="Yamada K."/>
            <person name="Lim J."/>
            <person name="Dale J.M."/>
            <person name="Chen H."/>
            <person name="Shinn P."/>
            <person name="Palm C.J."/>
            <person name="Southwick A.M."/>
            <person name="Wu H.C."/>
            <person name="Kim C.J."/>
            <person name="Nguyen M."/>
            <person name="Pham P.K."/>
            <person name="Cheuk R.F."/>
            <person name="Karlin-Newmann G."/>
            <person name="Liu S.X."/>
            <person name="Lam B."/>
            <person name="Sakano H."/>
            <person name="Wu T."/>
            <person name="Yu G."/>
            <person name="Miranda M."/>
            <person name="Quach H.L."/>
            <person name="Tripp M."/>
            <person name="Chang C.H."/>
            <person name="Lee J.M."/>
            <person name="Toriumi M.J."/>
            <person name="Chan M.M."/>
            <person name="Tang C.C."/>
            <person name="Onodera C.S."/>
            <person name="Deng J.M."/>
            <person name="Akiyama K."/>
            <person name="Ansari Y."/>
            <person name="Arakawa T."/>
            <person name="Banh J."/>
            <person name="Banno F."/>
            <person name="Bowser L."/>
            <person name="Brooks S.Y."/>
            <person name="Carninci P."/>
            <person name="Chao Q."/>
            <person name="Choy N."/>
            <person name="Enju A."/>
            <person name="Goldsmith A.D."/>
            <person name="Gurjal M."/>
            <person name="Hansen N.F."/>
            <person name="Hayashizaki Y."/>
            <person name="Johnson-Hopson C."/>
            <person name="Hsuan V.W."/>
            <person name="Iida K."/>
            <person name="Karnes M."/>
            <person name="Khan S."/>
            <person name="Koesema E."/>
            <person name="Ishida J."/>
            <person name="Jiang P.X."/>
            <person name="Jones T."/>
            <person name="Kawai J."/>
            <person name="Kamiya A."/>
            <person name="Meyers C."/>
            <person name="Nakajima M."/>
            <person name="Narusaka M."/>
            <person name="Seki M."/>
            <person name="Sakurai T."/>
            <person name="Satou M."/>
            <person name="Tamse R."/>
            <person name="Vaysberg M."/>
            <person name="Wallender E.K."/>
            <person name="Wong C."/>
            <person name="Yamamura Y."/>
            <person name="Yuan S."/>
            <person name="Shinozaki K."/>
            <person name="Davis R.W."/>
            <person name="Theologis A."/>
            <person name="Ecker J.R."/>
        </authorList>
    </citation>
    <scope>NUCLEOTIDE SEQUENCE [LARGE SCALE MRNA]</scope>
    <source>
        <strain>cv. Columbia</strain>
    </source>
</reference>
<reference key="4">
    <citation type="submission" date="2002-03" db="EMBL/GenBank/DDBJ databases">
        <title>Full-length cDNA from Arabidopsis thaliana.</title>
        <authorList>
            <person name="Brover V.V."/>
            <person name="Troukhan M.E."/>
            <person name="Alexandrov N.A."/>
            <person name="Lu Y.-P."/>
            <person name="Flavell R.B."/>
            <person name="Feldmann K.A."/>
        </authorList>
    </citation>
    <scope>NUCLEOTIDE SEQUENCE [LARGE SCALE MRNA]</scope>
</reference>
<reference key="5">
    <citation type="journal article" date="2005" name="Plant Physiol.">
        <title>Functional analysis of the RING-type ubiquitin ligase family of Arabidopsis.</title>
        <authorList>
            <person name="Stone S.L."/>
            <person name="Hauksdottir H."/>
            <person name="Troy A."/>
            <person name="Herschleb J."/>
            <person name="Kraft E."/>
            <person name="Callis J."/>
        </authorList>
    </citation>
    <scope>IDENTIFICATION</scope>
</reference>
<comment type="function">
    <text evidence="1">Mediates E2-dependent protein ubiquitination.</text>
</comment>
<comment type="catalytic activity">
    <reaction>
        <text>S-ubiquitinyl-[E2 ubiquitin-conjugating enzyme]-L-cysteine + [acceptor protein]-L-lysine = [E2 ubiquitin-conjugating enzyme]-L-cysteine + N(6)-ubiquitinyl-[acceptor protein]-L-lysine.</text>
        <dbReference type="EC" id="2.3.2.27"/>
    </reaction>
</comment>
<comment type="pathway">
    <text>Protein modification; protein ubiquitination.</text>
</comment>
<comment type="subcellular location">
    <subcellularLocation>
        <location evidence="5">Membrane</location>
        <topology evidence="5">Multi-pass membrane protein</topology>
    </subcellularLocation>
</comment>
<comment type="domain">
    <text evidence="1">The RING-type zinc finger domain mediates binding to an E2 ubiquitin-conjugating enzyme.</text>
</comment>
<sequence>MSRETTTEATPLILTDGGGGRRSVRRQGLREAARLLRHASSGRMMMREPSMLVREAAAEQLEERQSDWAYSKPVVVLDFVWNLAFVVVATAVLVLSSDENPNMPLRVWIIGYGLQCMMHMVCVCVEYRRRNSRRRRDLSPRSSSSSSSSSSSMDEEEGLGLSRNSDERYLELGQLENENNSFAKHLESANTMISFIWWVIGFYWVSSGGQELAQGSPQLYWLCIVFLGFDVFFVVFCVALACVIGIAVCCCLPCIIAVLYAVAEQEGASKEDIDQLTKFKFRKVGDTMKHTVDEEQGQGDSGGVMTECGTDSPVEHALPHEDAECCICLSAYEDETELRELPCGHHFHCGCVDKWLYINATCPLCKYNILKSSNYEEGEEV</sequence>
<proteinExistence type="evidence at transcript level"/>
<dbReference type="EC" id="2.3.2.27"/>
<dbReference type="EMBL" id="AC010795">
    <property type="protein sequence ID" value="AAG51597.1"/>
    <property type="molecule type" value="Genomic_DNA"/>
</dbReference>
<dbReference type="EMBL" id="CP002684">
    <property type="protein sequence ID" value="AEE34064.1"/>
    <property type="molecule type" value="Genomic_DNA"/>
</dbReference>
<dbReference type="EMBL" id="AY058092">
    <property type="protein sequence ID" value="AAL24200.1"/>
    <property type="molecule type" value="mRNA"/>
</dbReference>
<dbReference type="EMBL" id="AY086095">
    <property type="protein sequence ID" value="AAM63303.1"/>
    <property type="molecule type" value="mRNA"/>
</dbReference>
<dbReference type="PIR" id="C96657">
    <property type="entry name" value="C96657"/>
</dbReference>
<dbReference type="RefSeq" id="NP_564810.1">
    <property type="nucleotide sequence ID" value="NM_104995.4"/>
</dbReference>
<dbReference type="SMR" id="Q8LDB8"/>
<dbReference type="FunCoup" id="Q8LDB8">
    <property type="interactions" value="208"/>
</dbReference>
<dbReference type="STRING" id="3702.Q8LDB8"/>
<dbReference type="PaxDb" id="3702-AT1G63170.1"/>
<dbReference type="ProteomicsDB" id="236190"/>
<dbReference type="EnsemblPlants" id="AT1G63170.1">
    <property type="protein sequence ID" value="AT1G63170.1"/>
    <property type="gene ID" value="AT1G63170"/>
</dbReference>
<dbReference type="GeneID" id="842621"/>
<dbReference type="Gramene" id="AT1G63170.1">
    <property type="protein sequence ID" value="AT1G63170.1"/>
    <property type="gene ID" value="AT1G63170"/>
</dbReference>
<dbReference type="KEGG" id="ath:AT1G63170"/>
<dbReference type="Araport" id="AT1G63170"/>
<dbReference type="TAIR" id="AT1G63170"/>
<dbReference type="eggNOG" id="KOG0800">
    <property type="taxonomic scope" value="Eukaryota"/>
</dbReference>
<dbReference type="HOGENOM" id="CLU_038211_0_1_1"/>
<dbReference type="InParanoid" id="Q8LDB8"/>
<dbReference type="OMA" id="MISFIWW"/>
<dbReference type="PhylomeDB" id="Q8LDB8"/>
<dbReference type="UniPathway" id="UPA00143"/>
<dbReference type="PRO" id="PR:Q8LDB8"/>
<dbReference type="Proteomes" id="UP000006548">
    <property type="component" value="Chromosome 1"/>
</dbReference>
<dbReference type="ExpressionAtlas" id="Q8LDB8">
    <property type="expression patterns" value="baseline and differential"/>
</dbReference>
<dbReference type="GO" id="GO:0016020">
    <property type="term" value="C:membrane"/>
    <property type="evidence" value="ECO:0007669"/>
    <property type="project" value="UniProtKB-SubCell"/>
</dbReference>
<dbReference type="GO" id="GO:0016740">
    <property type="term" value="F:transferase activity"/>
    <property type="evidence" value="ECO:0007669"/>
    <property type="project" value="UniProtKB-KW"/>
</dbReference>
<dbReference type="GO" id="GO:0008270">
    <property type="term" value="F:zinc ion binding"/>
    <property type="evidence" value="ECO:0007669"/>
    <property type="project" value="UniProtKB-KW"/>
</dbReference>
<dbReference type="GO" id="GO:0016567">
    <property type="term" value="P:protein ubiquitination"/>
    <property type="evidence" value="ECO:0007669"/>
    <property type="project" value="UniProtKB-UniPathway"/>
</dbReference>
<dbReference type="FunFam" id="3.30.40.10:FF:000217">
    <property type="entry name" value="E3 ubiquitin-protein ligase At1g12760"/>
    <property type="match status" value="1"/>
</dbReference>
<dbReference type="Gene3D" id="3.30.40.10">
    <property type="entry name" value="Zinc/RING finger domain, C3HC4 (zinc finger)"/>
    <property type="match status" value="1"/>
</dbReference>
<dbReference type="InterPro" id="IPR001841">
    <property type="entry name" value="Znf_RING"/>
</dbReference>
<dbReference type="InterPro" id="IPR013083">
    <property type="entry name" value="Znf_RING/FYVE/PHD"/>
</dbReference>
<dbReference type="PANTHER" id="PTHR45977:SF45">
    <property type="entry name" value="RING-TYPE DOMAIN-CONTAINING PROTEIN"/>
    <property type="match status" value="1"/>
</dbReference>
<dbReference type="PANTHER" id="PTHR45977">
    <property type="entry name" value="TARGET OF ERK KINASE MPK-1"/>
    <property type="match status" value="1"/>
</dbReference>
<dbReference type="Pfam" id="PF13639">
    <property type="entry name" value="zf-RING_2"/>
    <property type="match status" value="1"/>
</dbReference>
<dbReference type="SMART" id="SM00184">
    <property type="entry name" value="RING"/>
    <property type="match status" value="1"/>
</dbReference>
<dbReference type="SUPFAM" id="SSF57850">
    <property type="entry name" value="RING/U-box"/>
    <property type="match status" value="1"/>
</dbReference>
<dbReference type="PROSITE" id="PS50089">
    <property type="entry name" value="ZF_RING_2"/>
    <property type="match status" value="1"/>
</dbReference>
<protein>
    <recommendedName>
        <fullName>E3 ubiquitin-protein ligase At1g63170</fullName>
        <ecNumber>2.3.2.27</ecNumber>
    </recommendedName>
    <alternativeName>
        <fullName>RING finger protein At1g63170</fullName>
    </alternativeName>
    <alternativeName>
        <fullName evidence="5">RING-type E3 ubiquitin transferase At1g63170</fullName>
    </alternativeName>
</protein>
<name>RING2_ARATH</name>
<feature type="chain" id="PRO_0000271542" description="E3 ubiquitin-protein ligase At1g63170">
    <location>
        <begin position="1"/>
        <end position="381"/>
    </location>
</feature>
<feature type="transmembrane region" description="Helical" evidence="2">
    <location>
        <begin position="74"/>
        <end position="94"/>
    </location>
</feature>
<feature type="transmembrane region" description="Helical" evidence="2">
    <location>
        <begin position="107"/>
        <end position="127"/>
    </location>
</feature>
<feature type="transmembrane region" description="Helical" evidence="2">
    <location>
        <begin position="189"/>
        <end position="209"/>
    </location>
</feature>
<feature type="transmembrane region" description="Helical" evidence="2">
    <location>
        <begin position="224"/>
        <end position="244"/>
    </location>
</feature>
<feature type="transmembrane region" description="Helical" evidence="2">
    <location>
        <begin position="245"/>
        <end position="265"/>
    </location>
</feature>
<feature type="zinc finger region" description="RING-type; atypical" evidence="3">
    <location>
        <begin position="325"/>
        <end position="366"/>
    </location>
</feature>
<feature type="region of interest" description="Disordered" evidence="4">
    <location>
        <begin position="1"/>
        <end position="23"/>
    </location>
</feature>
<feature type="region of interest" description="Disordered" evidence="4">
    <location>
        <begin position="135"/>
        <end position="161"/>
    </location>
</feature>
<feature type="coiled-coil region" evidence="2">
    <location>
        <begin position="170"/>
        <end position="194"/>
    </location>
</feature>
<feature type="compositionally biased region" description="Low complexity" evidence="4">
    <location>
        <begin position="140"/>
        <end position="152"/>
    </location>
</feature>
<feature type="sequence conflict" description="In Ref. 4; AAM63303." evidence="5" ref="4">
    <original>Q</original>
    <variation>E</variation>
    <location>
        <position position="298"/>
    </location>
</feature>
<feature type="sequence conflict" description="In Ref. 3; AAL24200." evidence="5" ref="3">
    <original>NYEEGEEV</original>
    <variation>GGGGGEKI</variation>
    <location>
        <begin position="374"/>
        <end position="381"/>
    </location>
</feature>
<keyword id="KW-0175">Coiled coil</keyword>
<keyword id="KW-0472">Membrane</keyword>
<keyword id="KW-0479">Metal-binding</keyword>
<keyword id="KW-1185">Reference proteome</keyword>
<keyword id="KW-0808">Transferase</keyword>
<keyword id="KW-0812">Transmembrane</keyword>
<keyword id="KW-1133">Transmembrane helix</keyword>
<keyword id="KW-0833">Ubl conjugation pathway</keyword>
<keyword id="KW-0862">Zinc</keyword>
<keyword id="KW-0863">Zinc-finger</keyword>
<organism>
    <name type="scientific">Arabidopsis thaliana</name>
    <name type="common">Mouse-ear cress</name>
    <dbReference type="NCBI Taxonomy" id="3702"/>
    <lineage>
        <taxon>Eukaryota</taxon>
        <taxon>Viridiplantae</taxon>
        <taxon>Streptophyta</taxon>
        <taxon>Embryophyta</taxon>
        <taxon>Tracheophyta</taxon>
        <taxon>Spermatophyta</taxon>
        <taxon>Magnoliopsida</taxon>
        <taxon>eudicotyledons</taxon>
        <taxon>Gunneridae</taxon>
        <taxon>Pentapetalae</taxon>
        <taxon>rosids</taxon>
        <taxon>malvids</taxon>
        <taxon>Brassicales</taxon>
        <taxon>Brassicaceae</taxon>
        <taxon>Camelineae</taxon>
        <taxon>Arabidopsis</taxon>
    </lineage>
</organism>